<proteinExistence type="evidence at protein level"/>
<comment type="function">
    <text evidence="2 5">Regulatory subunit of mitochondrial acetolactate synthase, which catalyzes the first of a series of common steps in the biosynthesis of the branched-chain amino acids. Stimulates activity of the acetolactate synthase catalytic subunit ILV2 seven- to tenfold and confers sensitivity to inhibition by valine and activation by ATP.</text>
</comment>
<comment type="pathway">
    <text evidence="7">Amino-acid biosynthesis; L-isoleucine biosynthesis; L-isoleucine from 2-oxobutanoate: step 1/4.</text>
</comment>
<comment type="pathway">
    <text evidence="7">Amino-acid biosynthesis; L-valine biosynthesis; L-valine from pyruvate: step 1/4.</text>
</comment>
<comment type="subunit">
    <text evidence="2">The acetolactate synthase complex contains the catalytic regulatory subunit ILV2 and the regulatory small subunit ILV6.</text>
</comment>
<comment type="interaction">
    <interactant intactId="EBI-9087">
        <id>P25605</id>
    </interactant>
    <interactant intactId="EBI-8603">
        <id>P10592</id>
        <label>SSA2</label>
    </interactant>
    <organismsDiffer>false</organismsDiffer>
    <experiments>2</experiments>
</comment>
<comment type="subcellular location">
    <subcellularLocation>
        <location evidence="7">Mitochondrion</location>
    </subcellularLocation>
</comment>
<comment type="miscellaneous">
    <text evidence="3">Present with 15800 molecules/cell in log phase SD medium.</text>
</comment>
<comment type="similarity">
    <text evidence="6">Belongs to the acetolactate synthase small subunit family.</text>
</comment>
<accession>P25605</accession>
<accession>D6VR03</accession>
<accession>P87009</accession>
<dbReference type="EMBL" id="X59720">
    <property type="protein sequence ID" value="CAA42350.1"/>
    <property type="molecule type" value="Genomic_DNA"/>
</dbReference>
<dbReference type="EMBL" id="BK006937">
    <property type="protein sequence ID" value="DAA07472.1"/>
    <property type="molecule type" value="Genomic_DNA"/>
</dbReference>
<dbReference type="PIR" id="S19411">
    <property type="entry name" value="S19411"/>
</dbReference>
<dbReference type="RefSeq" id="NP_009918.1">
    <property type="nucleotide sequence ID" value="NM_001178658.1"/>
</dbReference>
<dbReference type="PDB" id="6U9D">
    <property type="method" value="X-ray"/>
    <property type="resolution" value="3.19 A"/>
    <property type="chains" value="C/D/G/H/K/L/O/P/S/T/W/X=41-309"/>
</dbReference>
<dbReference type="PDB" id="6WO1">
    <property type="method" value="X-ray"/>
    <property type="resolution" value="3.30 A"/>
    <property type="chains" value="B=1-309"/>
</dbReference>
<dbReference type="PDBsum" id="6U9D"/>
<dbReference type="PDBsum" id="6WO1"/>
<dbReference type="SMR" id="P25605"/>
<dbReference type="BioGRID" id="30972">
    <property type="interactions" value="142"/>
</dbReference>
<dbReference type="ComplexPortal" id="CPX-3034">
    <property type="entry name" value="Acetolactate synthase complex"/>
</dbReference>
<dbReference type="DIP" id="DIP-671N"/>
<dbReference type="FunCoup" id="P25605">
    <property type="interactions" value="422"/>
</dbReference>
<dbReference type="IntAct" id="P25605">
    <property type="interactions" value="33"/>
</dbReference>
<dbReference type="MINT" id="P25605"/>
<dbReference type="STRING" id="4932.YCL009C"/>
<dbReference type="iPTMnet" id="P25605"/>
<dbReference type="PaxDb" id="4932-YCL009C"/>
<dbReference type="PeptideAtlas" id="P25605"/>
<dbReference type="EnsemblFungi" id="YCL009C_mRNA">
    <property type="protein sequence ID" value="YCL009C"/>
    <property type="gene ID" value="YCL009C"/>
</dbReference>
<dbReference type="GeneID" id="850348"/>
<dbReference type="KEGG" id="sce:YCL009C"/>
<dbReference type="AGR" id="SGD:S000000515"/>
<dbReference type="SGD" id="S000000515">
    <property type="gene designation" value="ILV6"/>
</dbReference>
<dbReference type="VEuPathDB" id="FungiDB:YCL009C"/>
<dbReference type="eggNOG" id="KOG2663">
    <property type="taxonomic scope" value="Eukaryota"/>
</dbReference>
<dbReference type="HOGENOM" id="CLU_055003_0_0_1"/>
<dbReference type="InParanoid" id="P25605"/>
<dbReference type="OMA" id="CARSGMM"/>
<dbReference type="OrthoDB" id="2013116at2759"/>
<dbReference type="BioCyc" id="YEAST:YCL009C-MONOMER"/>
<dbReference type="UniPathway" id="UPA00047">
    <property type="reaction ID" value="UER00055"/>
</dbReference>
<dbReference type="UniPathway" id="UPA00049">
    <property type="reaction ID" value="UER00059"/>
</dbReference>
<dbReference type="BioGRID-ORCS" id="850348">
    <property type="hits" value="3 hits in 10 CRISPR screens"/>
</dbReference>
<dbReference type="PRO" id="PR:P25605"/>
<dbReference type="Proteomes" id="UP000002311">
    <property type="component" value="Chromosome III"/>
</dbReference>
<dbReference type="RNAct" id="P25605">
    <property type="molecule type" value="protein"/>
</dbReference>
<dbReference type="GO" id="GO:0005948">
    <property type="term" value="C:acetolactate synthase complex"/>
    <property type="evidence" value="ECO:0000314"/>
    <property type="project" value="SGD"/>
</dbReference>
<dbReference type="GO" id="GO:0042645">
    <property type="term" value="C:mitochondrial nucleoid"/>
    <property type="evidence" value="ECO:0000314"/>
    <property type="project" value="SGD"/>
</dbReference>
<dbReference type="GO" id="GO:0005739">
    <property type="term" value="C:mitochondrion"/>
    <property type="evidence" value="ECO:0007005"/>
    <property type="project" value="SGD"/>
</dbReference>
<dbReference type="GO" id="GO:1990610">
    <property type="term" value="F:acetolactate synthase regulator activity"/>
    <property type="evidence" value="ECO:0007669"/>
    <property type="project" value="InterPro"/>
</dbReference>
<dbReference type="GO" id="GO:0030234">
    <property type="term" value="F:enzyme regulator activity"/>
    <property type="evidence" value="ECO:0000314"/>
    <property type="project" value="SGD"/>
</dbReference>
<dbReference type="GO" id="GO:0009082">
    <property type="term" value="P:branched-chain amino acid biosynthetic process"/>
    <property type="evidence" value="ECO:0000314"/>
    <property type="project" value="ComplexPortal"/>
</dbReference>
<dbReference type="GO" id="GO:0009097">
    <property type="term" value="P:isoleucine biosynthetic process"/>
    <property type="evidence" value="ECO:0007669"/>
    <property type="project" value="UniProtKB-UniPathway"/>
</dbReference>
<dbReference type="GO" id="GO:0009099">
    <property type="term" value="P:L-valine biosynthetic process"/>
    <property type="evidence" value="ECO:0007669"/>
    <property type="project" value="UniProtKB-UniPathway"/>
</dbReference>
<dbReference type="CDD" id="cd04878">
    <property type="entry name" value="ACT_AHAS"/>
    <property type="match status" value="1"/>
</dbReference>
<dbReference type="FunFam" id="3.30.70.260:FF:000001">
    <property type="entry name" value="Acetolactate synthase, small subunit"/>
    <property type="match status" value="1"/>
</dbReference>
<dbReference type="Gene3D" id="3.30.70.260">
    <property type="match status" value="1"/>
</dbReference>
<dbReference type="Gene3D" id="3.30.70.1150">
    <property type="entry name" value="ACT-like. Chain A, domain 2"/>
    <property type="match status" value="1"/>
</dbReference>
<dbReference type="InterPro" id="IPR004789">
    <property type="entry name" value="Acetalactate_synth_ssu"/>
</dbReference>
<dbReference type="InterPro" id="IPR027271">
    <property type="entry name" value="Acetolactate_synth/TF_NikR_C"/>
</dbReference>
<dbReference type="InterPro" id="IPR019455">
    <property type="entry name" value="Acetolactate_synth_ssu_C"/>
</dbReference>
<dbReference type="InterPro" id="IPR045865">
    <property type="entry name" value="ACT-like_dom_sf"/>
</dbReference>
<dbReference type="InterPro" id="IPR002912">
    <property type="entry name" value="ACT_dom"/>
</dbReference>
<dbReference type="InterPro" id="IPR039557">
    <property type="entry name" value="AHAS_ACT"/>
</dbReference>
<dbReference type="InterPro" id="IPR054480">
    <property type="entry name" value="AHAS_small-like_ACT"/>
</dbReference>
<dbReference type="InterPro" id="IPR053050">
    <property type="entry name" value="ALS_regulatory_subunit"/>
</dbReference>
<dbReference type="NCBIfam" id="TIGR00119">
    <property type="entry name" value="acolac_sm"/>
    <property type="match status" value="1"/>
</dbReference>
<dbReference type="PANTHER" id="PTHR31242">
    <property type="entry name" value="ACETOLACTATE SYNTHASE SMALL SUBUNIT, MITOCHONDRIAL"/>
    <property type="match status" value="1"/>
</dbReference>
<dbReference type="PANTHER" id="PTHR31242:SF2">
    <property type="entry name" value="ACETOLACTATE SYNTHASE SMALL SUBUNIT, MITOCHONDRIAL"/>
    <property type="match status" value="1"/>
</dbReference>
<dbReference type="Pfam" id="PF22629">
    <property type="entry name" value="ACT_AHAS_ss"/>
    <property type="match status" value="1"/>
</dbReference>
<dbReference type="Pfam" id="PF10369">
    <property type="entry name" value="ALS_ss_C"/>
    <property type="match status" value="1"/>
</dbReference>
<dbReference type="SUPFAM" id="SSF55021">
    <property type="entry name" value="ACT-like"/>
    <property type="match status" value="2"/>
</dbReference>
<dbReference type="PROSITE" id="PS51671">
    <property type="entry name" value="ACT"/>
    <property type="match status" value="1"/>
</dbReference>
<reference key="1">
    <citation type="journal article" date="1992" name="Nature">
        <title>The complete DNA sequence of yeast chromosome III.</title>
        <authorList>
            <person name="Oliver S.G."/>
            <person name="van der Aart Q.J.M."/>
            <person name="Agostoni-Carbone M.L."/>
            <person name="Aigle M."/>
            <person name="Alberghina L."/>
            <person name="Alexandraki D."/>
            <person name="Antoine G."/>
            <person name="Anwar R."/>
            <person name="Ballesta J.P.G."/>
            <person name="Benit P."/>
            <person name="Berben G."/>
            <person name="Bergantino E."/>
            <person name="Biteau N."/>
            <person name="Bolle P.-A."/>
            <person name="Bolotin-Fukuhara M."/>
            <person name="Brown A."/>
            <person name="Brown A.J.P."/>
            <person name="Buhler J.-M."/>
            <person name="Carcano C."/>
            <person name="Carignani G."/>
            <person name="Cederberg H."/>
            <person name="Chanet R."/>
            <person name="Contreras R."/>
            <person name="Crouzet M."/>
            <person name="Daignan-Fornier B."/>
            <person name="Defoor E."/>
            <person name="Delgado M.D."/>
            <person name="Demolder J."/>
            <person name="Doira C."/>
            <person name="Dubois E."/>
            <person name="Dujon B."/>
            <person name="Duesterhoeft A."/>
            <person name="Erdmann D."/>
            <person name="Esteban M."/>
            <person name="Fabre F."/>
            <person name="Fairhead C."/>
            <person name="Faye G."/>
            <person name="Feldmann H."/>
            <person name="Fiers W."/>
            <person name="Francingues-Gaillard M.-C."/>
            <person name="Franco L."/>
            <person name="Frontali L."/>
            <person name="Fukuhara H."/>
            <person name="Fuller L.J."/>
            <person name="Galland P."/>
            <person name="Gent M.E."/>
            <person name="Gigot D."/>
            <person name="Gilliquet V."/>
            <person name="Glansdorff N."/>
            <person name="Goffeau A."/>
            <person name="Grenson M."/>
            <person name="Grisanti P."/>
            <person name="Grivell L.A."/>
            <person name="de Haan M."/>
            <person name="Haasemann M."/>
            <person name="Hatat D."/>
            <person name="Hoenicka J."/>
            <person name="Hegemann J.H."/>
            <person name="Herbert C.J."/>
            <person name="Hilger F."/>
            <person name="Hohmann S."/>
            <person name="Hollenberg C.P."/>
            <person name="Huse K."/>
            <person name="Iborra F."/>
            <person name="Indge K.J."/>
            <person name="Isono K."/>
            <person name="Jacq C."/>
            <person name="Jacquet M."/>
            <person name="James C.M."/>
            <person name="Jauniaux J.-C."/>
            <person name="Jia Y."/>
            <person name="Jimenez A."/>
            <person name="Kelly A."/>
            <person name="Kleinhans U."/>
            <person name="Kreisl P."/>
            <person name="Lanfranchi G."/>
            <person name="Lewis C."/>
            <person name="van der Linden C.G."/>
            <person name="Lucchini G."/>
            <person name="Lutzenkirchen K."/>
            <person name="Maat M.J."/>
            <person name="Mallet L."/>
            <person name="Mannhaupt G."/>
            <person name="Martegani E."/>
            <person name="Mathieu A."/>
            <person name="Maurer C.T.C."/>
            <person name="McConnell D."/>
            <person name="McKee R.A."/>
            <person name="Messenguy F."/>
            <person name="Mewes H.-W."/>
            <person name="Molemans F."/>
            <person name="Montague M.A."/>
            <person name="Muzi Falconi M."/>
            <person name="Navas L."/>
            <person name="Newlon C.S."/>
            <person name="Noone D."/>
            <person name="Pallier C."/>
            <person name="Panzeri L."/>
            <person name="Pearson B.M."/>
            <person name="Perea J."/>
            <person name="Philippsen P."/>
            <person name="Pierard A."/>
            <person name="Planta R.J."/>
            <person name="Plevani P."/>
            <person name="Poetsch B."/>
            <person name="Pohl F.M."/>
            <person name="Purnelle B."/>
            <person name="Ramezani Rad M."/>
            <person name="Rasmussen S.W."/>
            <person name="Raynal A."/>
            <person name="Remacha M.A."/>
            <person name="Richterich P."/>
            <person name="Roberts A.B."/>
            <person name="Rodriguez F."/>
            <person name="Sanz E."/>
            <person name="Schaaff-Gerstenschlaeger I."/>
            <person name="Scherens B."/>
            <person name="Schweitzer B."/>
            <person name="Shu Y."/>
            <person name="Skala J."/>
            <person name="Slonimski P.P."/>
            <person name="Sor F."/>
            <person name="Soustelle C."/>
            <person name="Spiegelberg R."/>
            <person name="Stateva L.I."/>
            <person name="Steensma H.Y."/>
            <person name="Steiner S."/>
            <person name="Thierry A."/>
            <person name="Thireos G."/>
            <person name="Tzermia M."/>
            <person name="Urrestarazu L.A."/>
            <person name="Valle G."/>
            <person name="Vetter I."/>
            <person name="van Vliet-Reedijk J.C."/>
            <person name="Voet M."/>
            <person name="Volckaert G."/>
            <person name="Vreken P."/>
            <person name="Wang H."/>
            <person name="Warmington J.R."/>
            <person name="von Wettstein D."/>
            <person name="Wicksteed B.L."/>
            <person name="Wilson C."/>
            <person name="Wurst H."/>
            <person name="Xu G."/>
            <person name="Yoshikawa A."/>
            <person name="Zimmermann F.K."/>
            <person name="Sgouros J.G."/>
        </authorList>
    </citation>
    <scope>NUCLEOTIDE SEQUENCE [LARGE SCALE GENOMIC DNA]</scope>
    <source>
        <strain>ATCC 204508 / S288c</strain>
    </source>
</reference>
<reference key="2">
    <citation type="submission" date="1996-01" db="EMBL/GenBank/DDBJ databases">
        <authorList>
            <person name="Gromadka R."/>
        </authorList>
    </citation>
    <scope>SEQUENCE REVISION TO 300</scope>
</reference>
<reference key="3">
    <citation type="journal article" date="2014" name="G3 (Bethesda)">
        <title>The reference genome sequence of Saccharomyces cerevisiae: Then and now.</title>
        <authorList>
            <person name="Engel S.R."/>
            <person name="Dietrich F.S."/>
            <person name="Fisk D.G."/>
            <person name="Binkley G."/>
            <person name="Balakrishnan R."/>
            <person name="Costanzo M.C."/>
            <person name="Dwight S.S."/>
            <person name="Hitz B.C."/>
            <person name="Karra K."/>
            <person name="Nash R.S."/>
            <person name="Weng S."/>
            <person name="Wong E.D."/>
            <person name="Lloyd P."/>
            <person name="Skrzypek M.S."/>
            <person name="Miyasato S.R."/>
            <person name="Simison M."/>
            <person name="Cherry J.M."/>
        </authorList>
    </citation>
    <scope>GENOME REANNOTATION</scope>
    <source>
        <strain>ATCC 204508 / S288c</strain>
    </source>
</reference>
<reference key="4">
    <citation type="journal article" date="1992" name="Protein Sci.">
        <title>Comprehensive sequence analysis of the 182 predicted open reading frames of yeast chromosome III.</title>
        <authorList>
            <person name="Bork P."/>
            <person name="Ouzounis C."/>
            <person name="Sander C."/>
            <person name="Scharf M."/>
            <person name="Schneider R."/>
            <person name="Sonnhammer E."/>
        </authorList>
    </citation>
    <scope>SIMILARITY TO ACETOLACTATE SYNTHASE SMALL SUBUNITS</scope>
</reference>
<reference key="5">
    <citation type="journal article" date="1995" name="Yeast">
        <title>Two-dimensional protein map of Saccharomyces cerevisiae: construction of a gene-protein index.</title>
        <authorList>
            <person name="Boucherie H."/>
            <person name="Dujardin G."/>
            <person name="Kermorgant M."/>
            <person name="Monribot C."/>
            <person name="Slonimski P.P."/>
            <person name="Perrot M."/>
        </authorList>
    </citation>
    <scope>PROTEIN SEQUENCE OF 25-44</scope>
    <source>
        <strain>ATCC 204508 / S288c</strain>
    </source>
</reference>
<reference key="6">
    <citation type="journal article" date="1996" name="Yeast">
        <title>Functional analysis of YCL09C: evidence for a role as the regulatory subunit of acetolactate synthase.</title>
        <authorList>
            <person name="Cullin C."/>
            <person name="Baudin-Baillieu A."/>
            <person name="Guillemet E."/>
            <person name="Ozier-Kalogeropoulos O."/>
        </authorList>
    </citation>
    <scope>FUNCTION</scope>
</reference>
<reference key="7">
    <citation type="journal article" date="1999" name="Biochemistry">
        <title>Expression, purification, characterization, and reconstitution of the large and small subunits of yeast acetohydroxyacid synthase.</title>
        <authorList>
            <person name="Pang S.S."/>
            <person name="Duggleby R.G."/>
        </authorList>
    </citation>
    <scope>FUNCTION</scope>
    <scope>SUBUNIT</scope>
    <scope>PATHWAY</scope>
    <scope>SUBCELLULAR LOCATION</scope>
</reference>
<reference key="8">
    <citation type="journal article" date="2003" name="Nature">
        <title>Global analysis of protein expression in yeast.</title>
        <authorList>
            <person name="Ghaemmaghami S."/>
            <person name="Huh W.-K."/>
            <person name="Bower K."/>
            <person name="Howson R.W."/>
            <person name="Belle A."/>
            <person name="Dephoure N."/>
            <person name="O'Shea E.K."/>
            <person name="Weissman J.S."/>
        </authorList>
    </citation>
    <scope>LEVEL OF PROTEIN EXPRESSION [LARGE SCALE ANALYSIS]</scope>
</reference>
<organism>
    <name type="scientific">Saccharomyces cerevisiae (strain ATCC 204508 / S288c)</name>
    <name type="common">Baker's yeast</name>
    <dbReference type="NCBI Taxonomy" id="559292"/>
    <lineage>
        <taxon>Eukaryota</taxon>
        <taxon>Fungi</taxon>
        <taxon>Dikarya</taxon>
        <taxon>Ascomycota</taxon>
        <taxon>Saccharomycotina</taxon>
        <taxon>Saccharomycetes</taxon>
        <taxon>Saccharomycetales</taxon>
        <taxon>Saccharomycetaceae</taxon>
        <taxon>Saccharomyces</taxon>
    </lineage>
</organism>
<keyword id="KW-0002">3D-structure</keyword>
<keyword id="KW-0028">Amino-acid biosynthesis</keyword>
<keyword id="KW-0100">Branched-chain amino acid biosynthesis</keyword>
<keyword id="KW-0903">Direct protein sequencing</keyword>
<keyword id="KW-0496">Mitochondrion</keyword>
<keyword id="KW-1185">Reference proteome</keyword>
<keyword id="KW-0809">Transit peptide</keyword>
<feature type="transit peptide" description="Mitochondrion" evidence="4">
    <location>
        <begin position="1"/>
        <end position="24"/>
    </location>
</feature>
<feature type="chain" id="PRO_0000015637" description="Acetolactate synthase small subunit, mitochondrial">
    <location>
        <begin position="25"/>
        <end position="309"/>
    </location>
</feature>
<feature type="domain" description="ACT" evidence="1">
    <location>
        <begin position="79"/>
        <end position="159"/>
    </location>
</feature>
<feature type="helix" evidence="8">
    <location>
        <begin position="56"/>
        <end position="66"/>
    </location>
</feature>
<feature type="strand" evidence="8">
    <location>
        <begin position="77"/>
        <end position="85"/>
    </location>
</feature>
<feature type="helix" evidence="8">
    <location>
        <begin position="91"/>
        <end position="100"/>
    </location>
</feature>
<feature type="strand" evidence="8">
    <location>
        <begin position="105"/>
        <end position="112"/>
    </location>
</feature>
<feature type="strand" evidence="8">
    <location>
        <begin position="118"/>
        <end position="127"/>
    </location>
</feature>
<feature type="helix" evidence="8">
    <location>
        <begin position="129"/>
        <end position="140"/>
    </location>
</feature>
<feature type="strand" evidence="8">
    <location>
        <begin position="142"/>
        <end position="150"/>
    </location>
</feature>
<feature type="helix" evidence="9">
    <location>
        <begin position="151"/>
        <end position="153"/>
    </location>
</feature>
<feature type="strand" evidence="8">
    <location>
        <begin position="159"/>
        <end position="169"/>
    </location>
</feature>
<feature type="helix" evidence="8">
    <location>
        <begin position="171"/>
        <end position="180"/>
    </location>
</feature>
<feature type="helix" evidence="8">
    <location>
        <begin position="181"/>
        <end position="184"/>
    </location>
</feature>
<feature type="helix" evidence="8">
    <location>
        <begin position="188"/>
        <end position="190"/>
    </location>
</feature>
<feature type="helix" evidence="8">
    <location>
        <begin position="193"/>
        <end position="200"/>
    </location>
</feature>
<feature type="helix" evidence="8">
    <location>
        <begin position="206"/>
        <end position="208"/>
    </location>
</feature>
<feature type="helix" evidence="8">
    <location>
        <begin position="211"/>
        <end position="229"/>
    </location>
</feature>
<feature type="turn" evidence="8">
    <location>
        <begin position="230"/>
        <end position="233"/>
    </location>
</feature>
<feature type="strand" evidence="8">
    <location>
        <begin position="235"/>
        <end position="239"/>
    </location>
</feature>
<feature type="strand" evidence="8">
    <location>
        <begin position="241"/>
        <end position="250"/>
    </location>
</feature>
<feature type="helix" evidence="8">
    <location>
        <begin position="252"/>
        <end position="262"/>
    </location>
</feature>
<feature type="helix" evidence="8">
    <location>
        <begin position="263"/>
        <end position="265"/>
    </location>
</feature>
<feature type="strand" evidence="8">
    <location>
        <begin position="267"/>
        <end position="273"/>
    </location>
</feature>
<feature type="strand" evidence="9">
    <location>
        <begin position="276"/>
        <end position="279"/>
    </location>
</feature>
<feature type="turn" evidence="8">
    <location>
        <begin position="286"/>
        <end position="290"/>
    </location>
</feature>
<protein>
    <recommendedName>
        <fullName>Acetolactate synthase small subunit, mitochondrial</fullName>
    </recommendedName>
    <alternativeName>
        <fullName>Acetohydroxy-acid synthase small subunit</fullName>
        <shortName>AHAS</shortName>
        <shortName>ALS</shortName>
    </alternativeName>
</protein>
<sequence length="309" mass="33987">MLRSLLQSGHRRVVASSCATMVRCSSSSTSALAYKQMHRHATRPPLPTLDTPSWNANSAVSSIIYETPAPSRQPRKQHVLNCLVQNEPGVLSRVSGTLAARGFNIDSLVVCNTEVKDLSRMTIVLQGQDGVVEQARRQIEDLVPVYAVLDYTNSEIIKRELVMARISLLGTEYFEDLLLHHHTSTNAGAADSQELVAEIREKQFHPANLPASEVLRLKHEHLNDITNLTNNFGGRVVDISETSCIVELSAKPTRISAFLKLVEPFGVLECARSGMMALPRTPLKTSTEEAADEDEKISEIVDISQLPPG</sequence>
<evidence type="ECO:0000255" key="1">
    <source>
        <dbReference type="PROSITE-ProRule" id="PRU01007"/>
    </source>
</evidence>
<evidence type="ECO:0000269" key="2">
    <source>
    </source>
</evidence>
<evidence type="ECO:0000269" key="3">
    <source>
    </source>
</evidence>
<evidence type="ECO:0000269" key="4">
    <source>
    </source>
</evidence>
<evidence type="ECO:0000269" key="5">
    <source>
    </source>
</evidence>
<evidence type="ECO:0000305" key="6"/>
<evidence type="ECO:0000305" key="7">
    <source>
    </source>
</evidence>
<evidence type="ECO:0007829" key="8">
    <source>
        <dbReference type="PDB" id="6U9D"/>
    </source>
</evidence>
<evidence type="ECO:0007829" key="9">
    <source>
        <dbReference type="PDB" id="6WO1"/>
    </source>
</evidence>
<gene>
    <name type="primary">ILV6</name>
    <name type="ordered locus">YCL009C</name>
    <name type="ORF">YCL9C</name>
</gene>
<name>ILV6_YEAST</name>